<gene>
    <name evidence="1" type="primary">rpsD</name>
    <name type="ordered locus">SPG_0086</name>
</gene>
<sequence>MSRYTGPSWKQARRLGLSLTGTGKELARRNYVPGQHGPNNRSKLSEYGLQLAEKQKLRFTYGVGEKQFRNLFVQATKIKGGILGFNFMLLLERRLDNVVYRLGLATTRRQARQFVNHGHILVDGKRVDIPSYRVTPGQVISVREKSLKVPAILEAVEATLGRPAFVSFDAEKLEGSLTRLPERDEINPEINEALVVEFYNKML</sequence>
<comment type="function">
    <text evidence="1">One of the primary rRNA binding proteins, it binds directly to 16S rRNA where it nucleates assembly of the body of the 30S subunit.</text>
</comment>
<comment type="function">
    <text evidence="1">With S5 and S12 plays an important role in translational accuracy.</text>
</comment>
<comment type="subunit">
    <text evidence="1">Part of the 30S ribosomal subunit. Contacts protein S5. The interaction surface between S4 and S5 is involved in control of translational fidelity.</text>
</comment>
<comment type="similarity">
    <text evidence="1">Belongs to the universal ribosomal protein uS4 family.</text>
</comment>
<protein>
    <recommendedName>
        <fullName evidence="1">Small ribosomal subunit protein uS4</fullName>
    </recommendedName>
    <alternativeName>
        <fullName evidence="2">30S ribosomal protein S4</fullName>
    </alternativeName>
</protein>
<evidence type="ECO:0000255" key="1">
    <source>
        <dbReference type="HAMAP-Rule" id="MF_01306"/>
    </source>
</evidence>
<evidence type="ECO:0000305" key="2"/>
<reference key="1">
    <citation type="journal article" date="2001" name="Microb. Drug Resist.">
        <title>Annotated draft genomic sequence from a Streptococcus pneumoniae type 19F clinical isolate.</title>
        <authorList>
            <person name="Dopazo J."/>
            <person name="Mendoza A."/>
            <person name="Herrero J."/>
            <person name="Caldara F."/>
            <person name="Humbert Y."/>
            <person name="Friedli L."/>
            <person name="Guerrier M."/>
            <person name="Grand-Schenk E."/>
            <person name="Gandin C."/>
            <person name="de Francesco M."/>
            <person name="Polissi A."/>
            <person name="Buell G."/>
            <person name="Feger G."/>
            <person name="Garcia E."/>
            <person name="Peitsch M."/>
            <person name="Garcia-Bustos J.F."/>
        </authorList>
    </citation>
    <scope>NUCLEOTIDE SEQUENCE [LARGE SCALE GENOMIC DNA]</scope>
    <source>
        <strain>G54</strain>
    </source>
</reference>
<reference key="2">
    <citation type="submission" date="2008-03" db="EMBL/GenBank/DDBJ databases">
        <title>Pneumococcal beta glucoside metabolism investigated by whole genome comparison.</title>
        <authorList>
            <person name="Mulas L."/>
            <person name="Trappetti C."/>
            <person name="Hakenbeck R."/>
            <person name="Iannelli F."/>
            <person name="Pozzi G."/>
            <person name="Davidsen T.M."/>
            <person name="Tettelin H."/>
            <person name="Oggioni M."/>
        </authorList>
    </citation>
    <scope>NUCLEOTIDE SEQUENCE [LARGE SCALE GENOMIC DNA]</scope>
    <source>
        <strain>G54</strain>
    </source>
</reference>
<dbReference type="EMBL" id="CP001015">
    <property type="protein sequence ID" value="ACF56421.1"/>
    <property type="molecule type" value="Genomic_DNA"/>
</dbReference>
<dbReference type="SMR" id="B5E5W8"/>
<dbReference type="KEGG" id="spx:SPG_0086"/>
<dbReference type="HOGENOM" id="CLU_092403_0_1_9"/>
<dbReference type="GO" id="GO:0015935">
    <property type="term" value="C:small ribosomal subunit"/>
    <property type="evidence" value="ECO:0007669"/>
    <property type="project" value="InterPro"/>
</dbReference>
<dbReference type="GO" id="GO:0019843">
    <property type="term" value="F:rRNA binding"/>
    <property type="evidence" value="ECO:0007669"/>
    <property type="project" value="UniProtKB-UniRule"/>
</dbReference>
<dbReference type="GO" id="GO:0003735">
    <property type="term" value="F:structural constituent of ribosome"/>
    <property type="evidence" value="ECO:0007669"/>
    <property type="project" value="InterPro"/>
</dbReference>
<dbReference type="GO" id="GO:0042274">
    <property type="term" value="P:ribosomal small subunit biogenesis"/>
    <property type="evidence" value="ECO:0007669"/>
    <property type="project" value="TreeGrafter"/>
</dbReference>
<dbReference type="GO" id="GO:0006412">
    <property type="term" value="P:translation"/>
    <property type="evidence" value="ECO:0007669"/>
    <property type="project" value="UniProtKB-UniRule"/>
</dbReference>
<dbReference type="CDD" id="cd00165">
    <property type="entry name" value="S4"/>
    <property type="match status" value="1"/>
</dbReference>
<dbReference type="FunFam" id="1.10.1050.10:FF:000001">
    <property type="entry name" value="30S ribosomal protein S4"/>
    <property type="match status" value="1"/>
</dbReference>
<dbReference type="FunFam" id="3.10.290.10:FF:000001">
    <property type="entry name" value="30S ribosomal protein S4"/>
    <property type="match status" value="1"/>
</dbReference>
<dbReference type="Gene3D" id="1.10.1050.10">
    <property type="entry name" value="Ribosomal Protein S4 Delta 41, Chain A, domain 1"/>
    <property type="match status" value="1"/>
</dbReference>
<dbReference type="Gene3D" id="3.10.290.10">
    <property type="entry name" value="RNA-binding S4 domain"/>
    <property type="match status" value="1"/>
</dbReference>
<dbReference type="HAMAP" id="MF_01306_B">
    <property type="entry name" value="Ribosomal_uS4_B"/>
    <property type="match status" value="1"/>
</dbReference>
<dbReference type="InterPro" id="IPR022801">
    <property type="entry name" value="Ribosomal_uS4"/>
</dbReference>
<dbReference type="InterPro" id="IPR005709">
    <property type="entry name" value="Ribosomal_uS4_bac-type"/>
</dbReference>
<dbReference type="InterPro" id="IPR018079">
    <property type="entry name" value="Ribosomal_uS4_CS"/>
</dbReference>
<dbReference type="InterPro" id="IPR001912">
    <property type="entry name" value="Ribosomal_uS4_N"/>
</dbReference>
<dbReference type="InterPro" id="IPR002942">
    <property type="entry name" value="S4_RNA-bd"/>
</dbReference>
<dbReference type="InterPro" id="IPR036986">
    <property type="entry name" value="S4_RNA-bd_sf"/>
</dbReference>
<dbReference type="NCBIfam" id="NF003717">
    <property type="entry name" value="PRK05327.1"/>
    <property type="match status" value="1"/>
</dbReference>
<dbReference type="NCBIfam" id="TIGR01017">
    <property type="entry name" value="rpsD_bact"/>
    <property type="match status" value="1"/>
</dbReference>
<dbReference type="PANTHER" id="PTHR11831">
    <property type="entry name" value="30S 40S RIBOSOMAL PROTEIN"/>
    <property type="match status" value="1"/>
</dbReference>
<dbReference type="PANTHER" id="PTHR11831:SF4">
    <property type="entry name" value="SMALL RIBOSOMAL SUBUNIT PROTEIN US4M"/>
    <property type="match status" value="1"/>
</dbReference>
<dbReference type="Pfam" id="PF00163">
    <property type="entry name" value="Ribosomal_S4"/>
    <property type="match status" value="1"/>
</dbReference>
<dbReference type="Pfam" id="PF01479">
    <property type="entry name" value="S4"/>
    <property type="match status" value="1"/>
</dbReference>
<dbReference type="SMART" id="SM01390">
    <property type="entry name" value="Ribosomal_S4"/>
    <property type="match status" value="1"/>
</dbReference>
<dbReference type="SMART" id="SM00363">
    <property type="entry name" value="S4"/>
    <property type="match status" value="1"/>
</dbReference>
<dbReference type="SUPFAM" id="SSF55174">
    <property type="entry name" value="Alpha-L RNA-binding motif"/>
    <property type="match status" value="1"/>
</dbReference>
<dbReference type="PROSITE" id="PS00632">
    <property type="entry name" value="RIBOSOMAL_S4"/>
    <property type="match status" value="1"/>
</dbReference>
<dbReference type="PROSITE" id="PS50889">
    <property type="entry name" value="S4"/>
    <property type="match status" value="1"/>
</dbReference>
<name>RS4_STRP4</name>
<feature type="chain" id="PRO_1000140799" description="Small ribosomal subunit protein uS4">
    <location>
        <begin position="1"/>
        <end position="203"/>
    </location>
</feature>
<feature type="domain" description="S4 RNA-binding" evidence="1">
    <location>
        <begin position="93"/>
        <end position="156"/>
    </location>
</feature>
<proteinExistence type="inferred from homology"/>
<accession>B5E5W8</accession>
<keyword id="KW-0687">Ribonucleoprotein</keyword>
<keyword id="KW-0689">Ribosomal protein</keyword>
<keyword id="KW-0694">RNA-binding</keyword>
<keyword id="KW-0699">rRNA-binding</keyword>
<organism>
    <name type="scientific">Streptococcus pneumoniae serotype 19F (strain G54)</name>
    <dbReference type="NCBI Taxonomy" id="512566"/>
    <lineage>
        <taxon>Bacteria</taxon>
        <taxon>Bacillati</taxon>
        <taxon>Bacillota</taxon>
        <taxon>Bacilli</taxon>
        <taxon>Lactobacillales</taxon>
        <taxon>Streptococcaceae</taxon>
        <taxon>Streptococcus</taxon>
    </lineage>
</organism>